<gene>
    <name evidence="1" type="primary">deoB</name>
    <name type="ordered locus">A2cp1_0956</name>
</gene>
<organism>
    <name type="scientific">Anaeromyxobacter dehalogenans (strain 2CP-1 / ATCC BAA-258)</name>
    <dbReference type="NCBI Taxonomy" id="455488"/>
    <lineage>
        <taxon>Bacteria</taxon>
        <taxon>Pseudomonadati</taxon>
        <taxon>Myxococcota</taxon>
        <taxon>Myxococcia</taxon>
        <taxon>Myxococcales</taxon>
        <taxon>Cystobacterineae</taxon>
        <taxon>Anaeromyxobacteraceae</taxon>
        <taxon>Anaeromyxobacter</taxon>
    </lineage>
</organism>
<keyword id="KW-0963">Cytoplasm</keyword>
<keyword id="KW-0413">Isomerase</keyword>
<keyword id="KW-0464">Manganese</keyword>
<keyword id="KW-0479">Metal-binding</keyword>
<name>DEOB_ANAD2</name>
<proteinExistence type="inferred from homology"/>
<comment type="function">
    <text evidence="1">Isomerase that catalyzes the conversion of deoxy-ribose 1-phosphate (dRib-1-P) and ribose 1-phosphate (Rib-1-P) to deoxy-ribose 5-phosphate (dRib-5-P) and ribose 5-phosphate (Rib-5-P), respectively.</text>
</comment>
<comment type="catalytic activity">
    <reaction evidence="1">
        <text>2-deoxy-alpha-D-ribose 1-phosphate = 2-deoxy-D-ribose 5-phosphate</text>
        <dbReference type="Rhea" id="RHEA:27658"/>
        <dbReference type="ChEBI" id="CHEBI:57259"/>
        <dbReference type="ChEBI" id="CHEBI:62877"/>
        <dbReference type="EC" id="5.4.2.7"/>
    </reaction>
</comment>
<comment type="catalytic activity">
    <reaction evidence="1">
        <text>alpha-D-ribose 1-phosphate = D-ribose 5-phosphate</text>
        <dbReference type="Rhea" id="RHEA:18793"/>
        <dbReference type="ChEBI" id="CHEBI:57720"/>
        <dbReference type="ChEBI" id="CHEBI:78346"/>
        <dbReference type="EC" id="5.4.2.7"/>
    </reaction>
</comment>
<comment type="cofactor">
    <cofactor evidence="1">
        <name>Mn(2+)</name>
        <dbReference type="ChEBI" id="CHEBI:29035"/>
    </cofactor>
    <text evidence="1">Binds 2 manganese ions.</text>
</comment>
<comment type="pathway">
    <text evidence="1">Carbohydrate degradation; 2-deoxy-D-ribose 1-phosphate degradation; D-glyceraldehyde 3-phosphate and acetaldehyde from 2-deoxy-alpha-D-ribose 1-phosphate: step 1/2.</text>
</comment>
<comment type="subcellular location">
    <subcellularLocation>
        <location evidence="1">Cytoplasm</location>
    </subcellularLocation>
</comment>
<comment type="similarity">
    <text evidence="1">Belongs to the phosphopentomutase family.</text>
</comment>
<protein>
    <recommendedName>
        <fullName evidence="1">Phosphopentomutase</fullName>
        <ecNumber evidence="1">5.4.2.7</ecNumber>
    </recommendedName>
    <alternativeName>
        <fullName evidence="1">Phosphodeoxyribomutase</fullName>
    </alternativeName>
</protein>
<accession>B8JEI1</accession>
<sequence>MNRRLVILVADSAGCGALPDAAAYGDAGSDTLGNTSRAVGGLSLPVLGAMGLGHVTAIQGVPPDPAPTAFHGRMAERSEGKDTTTGHWEMMGVVLRQGLRTFPGGFPPEIVEAFVRETGAPGVLGNTVASGTVIIQELGEEHQRTGKPIVYTSADSVFQVAAHTDTVPLETLYAWCRTARRILDPWRVARVIARPFVGTPGKYARTYDRKDFSMPPPATTVLERLVEAGVPVVGVGKIPDIFDRRGITEEIHTAGNADGLARTAALLDRVDRGLVFVNLVDFDMLYGHRNDPAGYARALEELDRALPAILDRLGPGDLLALTADHGCDPTTPSTDHSREHVPLLVHAPGRGGGDLGTRTTFADLGATVAEYFGVRSDVGTSFLAEVTR</sequence>
<reference key="1">
    <citation type="submission" date="2009-01" db="EMBL/GenBank/DDBJ databases">
        <title>Complete sequence of Anaeromyxobacter dehalogenans 2CP-1.</title>
        <authorList>
            <person name="Lucas S."/>
            <person name="Copeland A."/>
            <person name="Lapidus A."/>
            <person name="Glavina del Rio T."/>
            <person name="Dalin E."/>
            <person name="Tice H."/>
            <person name="Bruce D."/>
            <person name="Goodwin L."/>
            <person name="Pitluck S."/>
            <person name="Saunders E."/>
            <person name="Brettin T."/>
            <person name="Detter J.C."/>
            <person name="Han C."/>
            <person name="Larimer F."/>
            <person name="Land M."/>
            <person name="Hauser L."/>
            <person name="Kyrpides N."/>
            <person name="Ovchinnikova G."/>
            <person name="Beliaev A.S."/>
            <person name="Richardson P."/>
        </authorList>
    </citation>
    <scope>NUCLEOTIDE SEQUENCE [LARGE SCALE GENOMIC DNA]</scope>
    <source>
        <strain>2CP-1 / ATCC BAA-258</strain>
    </source>
</reference>
<evidence type="ECO:0000255" key="1">
    <source>
        <dbReference type="HAMAP-Rule" id="MF_00740"/>
    </source>
</evidence>
<dbReference type="EC" id="5.4.2.7" evidence="1"/>
<dbReference type="EMBL" id="CP001359">
    <property type="protein sequence ID" value="ACL64307.1"/>
    <property type="molecule type" value="Genomic_DNA"/>
</dbReference>
<dbReference type="RefSeq" id="WP_012632309.1">
    <property type="nucleotide sequence ID" value="NC_011891.1"/>
</dbReference>
<dbReference type="SMR" id="B8JEI1"/>
<dbReference type="KEGG" id="acp:A2cp1_0956"/>
<dbReference type="HOGENOM" id="CLU_053861_0_0_7"/>
<dbReference type="UniPathway" id="UPA00002">
    <property type="reaction ID" value="UER00467"/>
</dbReference>
<dbReference type="Proteomes" id="UP000007089">
    <property type="component" value="Chromosome"/>
</dbReference>
<dbReference type="GO" id="GO:0005829">
    <property type="term" value="C:cytosol"/>
    <property type="evidence" value="ECO:0007669"/>
    <property type="project" value="TreeGrafter"/>
</dbReference>
<dbReference type="GO" id="GO:0000287">
    <property type="term" value="F:magnesium ion binding"/>
    <property type="evidence" value="ECO:0007669"/>
    <property type="project" value="InterPro"/>
</dbReference>
<dbReference type="GO" id="GO:0030145">
    <property type="term" value="F:manganese ion binding"/>
    <property type="evidence" value="ECO:0007669"/>
    <property type="project" value="UniProtKB-UniRule"/>
</dbReference>
<dbReference type="GO" id="GO:0008973">
    <property type="term" value="F:phosphopentomutase activity"/>
    <property type="evidence" value="ECO:0007669"/>
    <property type="project" value="UniProtKB-UniRule"/>
</dbReference>
<dbReference type="GO" id="GO:0006018">
    <property type="term" value="P:2-deoxyribose 1-phosphate catabolic process"/>
    <property type="evidence" value="ECO:0007669"/>
    <property type="project" value="UniProtKB-UniRule"/>
</dbReference>
<dbReference type="GO" id="GO:0006015">
    <property type="term" value="P:5-phosphoribose 1-diphosphate biosynthetic process"/>
    <property type="evidence" value="ECO:0007669"/>
    <property type="project" value="UniProtKB-UniPathway"/>
</dbReference>
<dbReference type="GO" id="GO:0043094">
    <property type="term" value="P:metabolic compound salvage"/>
    <property type="evidence" value="ECO:0007669"/>
    <property type="project" value="InterPro"/>
</dbReference>
<dbReference type="GO" id="GO:0009117">
    <property type="term" value="P:nucleotide metabolic process"/>
    <property type="evidence" value="ECO:0007669"/>
    <property type="project" value="InterPro"/>
</dbReference>
<dbReference type="CDD" id="cd16009">
    <property type="entry name" value="PPM"/>
    <property type="match status" value="1"/>
</dbReference>
<dbReference type="Gene3D" id="3.40.720.10">
    <property type="entry name" value="Alkaline Phosphatase, subunit A"/>
    <property type="match status" value="1"/>
</dbReference>
<dbReference type="Gene3D" id="3.30.70.1250">
    <property type="entry name" value="Phosphopentomutase"/>
    <property type="match status" value="1"/>
</dbReference>
<dbReference type="HAMAP" id="MF_00740">
    <property type="entry name" value="Phosphopentomut"/>
    <property type="match status" value="1"/>
</dbReference>
<dbReference type="InterPro" id="IPR017850">
    <property type="entry name" value="Alkaline_phosphatase_core_sf"/>
</dbReference>
<dbReference type="InterPro" id="IPR010045">
    <property type="entry name" value="DeoB"/>
</dbReference>
<dbReference type="InterPro" id="IPR006124">
    <property type="entry name" value="Metalloenzyme"/>
</dbReference>
<dbReference type="InterPro" id="IPR024052">
    <property type="entry name" value="Phosphopentomutase_DeoB_cap_sf"/>
</dbReference>
<dbReference type="NCBIfam" id="TIGR01696">
    <property type="entry name" value="deoB"/>
    <property type="match status" value="1"/>
</dbReference>
<dbReference type="NCBIfam" id="NF003766">
    <property type="entry name" value="PRK05362.1"/>
    <property type="match status" value="1"/>
</dbReference>
<dbReference type="PANTHER" id="PTHR21110">
    <property type="entry name" value="PHOSPHOPENTOMUTASE"/>
    <property type="match status" value="1"/>
</dbReference>
<dbReference type="PANTHER" id="PTHR21110:SF0">
    <property type="entry name" value="PHOSPHOPENTOMUTASE"/>
    <property type="match status" value="1"/>
</dbReference>
<dbReference type="Pfam" id="PF01676">
    <property type="entry name" value="Metalloenzyme"/>
    <property type="match status" value="1"/>
</dbReference>
<dbReference type="PIRSF" id="PIRSF001491">
    <property type="entry name" value="Ppentomutase"/>
    <property type="match status" value="1"/>
</dbReference>
<dbReference type="SUPFAM" id="SSF53649">
    <property type="entry name" value="Alkaline phosphatase-like"/>
    <property type="match status" value="1"/>
</dbReference>
<dbReference type="SUPFAM" id="SSF143856">
    <property type="entry name" value="DeoB insert domain-like"/>
    <property type="match status" value="1"/>
</dbReference>
<feature type="chain" id="PRO_1000189770" description="Phosphopentomutase">
    <location>
        <begin position="1"/>
        <end position="388"/>
    </location>
</feature>
<feature type="binding site" evidence="1">
    <location>
        <position position="11"/>
    </location>
    <ligand>
        <name>Mn(2+)</name>
        <dbReference type="ChEBI" id="CHEBI:29035"/>
        <label>1</label>
    </ligand>
</feature>
<feature type="binding site" evidence="1">
    <location>
        <position position="283"/>
    </location>
    <ligand>
        <name>Mn(2+)</name>
        <dbReference type="ChEBI" id="CHEBI:29035"/>
        <label>2</label>
    </ligand>
</feature>
<feature type="binding site" evidence="1">
    <location>
        <position position="288"/>
    </location>
    <ligand>
        <name>Mn(2+)</name>
        <dbReference type="ChEBI" id="CHEBI:29035"/>
        <label>2</label>
    </ligand>
</feature>
<feature type="binding site" evidence="1">
    <location>
        <position position="324"/>
    </location>
    <ligand>
        <name>Mn(2+)</name>
        <dbReference type="ChEBI" id="CHEBI:29035"/>
        <label>1</label>
    </ligand>
</feature>
<feature type="binding site" evidence="1">
    <location>
        <position position="325"/>
    </location>
    <ligand>
        <name>Mn(2+)</name>
        <dbReference type="ChEBI" id="CHEBI:29035"/>
        <label>1</label>
    </ligand>
</feature>
<feature type="binding site" evidence="1">
    <location>
        <position position="336"/>
    </location>
    <ligand>
        <name>Mn(2+)</name>
        <dbReference type="ChEBI" id="CHEBI:29035"/>
        <label>2</label>
    </ligand>
</feature>